<proteinExistence type="evidence at protein level"/>
<reference key="1">
    <citation type="journal article" date="1989" name="Nucleic Acids Res.">
        <title>Nucleotide sequence of the penicillin-binding protein 2B gene of Streptococcus pneumoniae strain R6.</title>
        <authorList>
            <person name="Dowson C.G."/>
            <person name="Hutchison A."/>
            <person name="Spratt B.G."/>
        </authorList>
    </citation>
    <scope>NUCLEOTIDE SEQUENCE [GENOMIC DNA]</scope>
    <source>
        <strain>ATCC BAA-255 / R6</strain>
    </source>
</reference>
<reference key="2">
    <citation type="journal article" date="2001" name="J. Bacteriol.">
        <title>Genome of the bacterium Streptococcus pneumoniae strain R6.</title>
        <authorList>
            <person name="Hoskins J."/>
            <person name="Alborn W.E. Jr."/>
            <person name="Arnold J."/>
            <person name="Blaszczak L.C."/>
            <person name="Burgett S."/>
            <person name="DeHoff B.S."/>
            <person name="Estrem S.T."/>
            <person name="Fritz L."/>
            <person name="Fu D.-J."/>
            <person name="Fuller W."/>
            <person name="Geringer C."/>
            <person name="Gilmour R."/>
            <person name="Glass J.S."/>
            <person name="Khoja H."/>
            <person name="Kraft A.R."/>
            <person name="Lagace R.E."/>
            <person name="LeBlanc D.J."/>
            <person name="Lee L.N."/>
            <person name="Lefkowitz E.J."/>
            <person name="Lu J."/>
            <person name="Matsushima P."/>
            <person name="McAhren S.M."/>
            <person name="McHenney M."/>
            <person name="McLeaster K."/>
            <person name="Mundy C.W."/>
            <person name="Nicas T.I."/>
            <person name="Norris F.H."/>
            <person name="O'Gara M."/>
            <person name="Peery R.B."/>
            <person name="Robertson G.T."/>
            <person name="Rockey P."/>
            <person name="Sun P.-M."/>
            <person name="Winkler M.E."/>
            <person name="Yang Y."/>
            <person name="Young-Bellido M."/>
            <person name="Zhao G."/>
            <person name="Zook C.A."/>
            <person name="Baltz R.H."/>
            <person name="Jaskunas S.R."/>
            <person name="Rosteck P.R. Jr."/>
            <person name="Skatrud P.L."/>
            <person name="Glass J.I."/>
        </authorList>
    </citation>
    <scope>NUCLEOTIDE SEQUENCE [LARGE SCALE GENOMIC DNA]</scope>
    <source>
        <strain>ATCC BAA-255 / R6</strain>
    </source>
</reference>
<reference key="3">
    <citation type="journal article" date="1989" name="Mol. Microbiol.">
        <title>Extensive re-modelling of the transpeptidase domain of penicillin-binding protein 2B of a penicillin-resistant South African isolate of Streptococcus pneumoniae.</title>
        <authorList>
            <person name="Dowson C.G."/>
            <person name="Hutchison A."/>
            <person name="Spratt B.G."/>
        </authorList>
    </citation>
    <scope>NUCLEOTIDE SEQUENCE [GENOMIC DNA] OF 195-680</scope>
    <source>
        <strain>ATCC BAA-255 / R6</strain>
    </source>
</reference>
<reference key="4">
    <citation type="journal article" date="1993" name="FEMS Microbiol. Lett.">
        <title>Deletion analysis of the essentiality of penicillin-binding proteins 1A, 2B and 2X of Streptococcus pneumoniae.</title>
        <authorList>
            <person name="Kell C.M."/>
            <person name="Sharma U.K."/>
            <person name="Dowson C.G."/>
            <person name="Town C."/>
            <person name="Balganesh T.S."/>
            <person name="Spratt B.G."/>
        </authorList>
    </citation>
    <scope>DISRUPTION PHENOTYPE</scope>
    <source>
        <strain>ATCC BAA-255 / R6</strain>
    </source>
</reference>
<reference key="5">
    <citation type="journal article" date="2013" name="J. Bacteriol.">
        <title>Effects of low PBP2b levels on cell morphology and peptidoglycan composition in Streptococcus pneumoniae R6.</title>
        <authorList>
            <person name="Berg K.H."/>
            <person name="Stamsaas G.A."/>
            <person name="Straume D."/>
            <person name="Haavarstein L.S."/>
        </authorList>
    </citation>
    <scope>FUNCTION</scope>
    <scope>DISRUPTION PHENOTYPE</scope>
    <source>
        <strain>R6 / R704</strain>
    </source>
</reference>
<reference key="6">
    <citation type="journal article" date="2017" name="Mol. Microbiol.">
        <title>Identification of EloR (Spr1851) as a regulator of cell elongation in Streptococcus pneumoniae.</title>
        <authorList>
            <person name="Stamsaas G.A."/>
            <person name="Straume D."/>
            <person name="Ruud Winther A."/>
            <person name="Kjos M."/>
            <person name="Frantzen C.A."/>
            <person name="Haavarstein L.S."/>
        </authorList>
    </citation>
    <scope>SUBUNIT</scope>
    <source>
        <strain>R6 / R704</strain>
    </source>
</reference>
<reference evidence="13 14 15" key="7">
    <citation type="journal article" date="2009" name="J. Mol. Biol.">
        <title>PBP active site flexibility as the key mechanism for beta-lactam resistance in pneumococci.</title>
        <authorList>
            <person name="Contreras-Martel C."/>
            <person name="Dahout-Gonzalez C."/>
            <person name="Martins Ados S."/>
            <person name="Kotnik M."/>
            <person name="Dessen A."/>
        </authorList>
    </citation>
    <scope>X-RAY CRYSTALLOGRAPHY (3.29 ANGSTROMS) OF 36-680</scope>
    <scope>FUNCTION</scope>
    <scope>PROBABLE ACTIVE SITE</scope>
    <scope>DOMAIN</scope>
    <source>
        <strain>5204</strain>
        <strain>ATCC BAA-255 / R6</strain>
    </source>
</reference>
<evidence type="ECO:0000250" key="1">
    <source>
        <dbReference type="UniProtKB" id="A0A0H2ZQ75"/>
    </source>
</evidence>
<evidence type="ECO:0000250" key="2">
    <source>
        <dbReference type="UniProtKB" id="P0AD65"/>
    </source>
</evidence>
<evidence type="ECO:0000255" key="3"/>
<evidence type="ECO:0000269" key="4">
    <source>
    </source>
</evidence>
<evidence type="ECO:0000269" key="5">
    <source>
    </source>
</evidence>
<evidence type="ECO:0000269" key="6">
    <source>
    </source>
</evidence>
<evidence type="ECO:0000269" key="7">
    <source>
    </source>
</evidence>
<evidence type="ECO:0000303" key="8">
    <source>
    </source>
</evidence>
<evidence type="ECO:0000303" key="9">
    <source>
    </source>
</evidence>
<evidence type="ECO:0000305" key="10"/>
<evidence type="ECO:0000305" key="11">
    <source>
    </source>
</evidence>
<evidence type="ECO:0000305" key="12">
    <source>
    </source>
</evidence>
<evidence type="ECO:0007744" key="13">
    <source>
        <dbReference type="PDB" id="2WAD"/>
    </source>
</evidence>
<evidence type="ECO:0007744" key="14">
    <source>
        <dbReference type="PDB" id="2WAE"/>
    </source>
</evidence>
<evidence type="ECO:0007744" key="15">
    <source>
        <dbReference type="PDB" id="2WAF"/>
    </source>
</evidence>
<evidence type="ECO:0007829" key="16">
    <source>
        <dbReference type="PDB" id="2WAD"/>
    </source>
</evidence>
<evidence type="ECO:0007829" key="17">
    <source>
        <dbReference type="PDB" id="2WAE"/>
    </source>
</evidence>
<evidence type="ECO:0007829" key="18">
    <source>
        <dbReference type="PDB" id="2WAF"/>
    </source>
</evidence>
<name>PBP2_STRR6</name>
<comment type="function">
    <text evidence="11 12">A transpeptidase that forms peptide cross-links between adjacent glycan strands in cell wall peptidoglycan (PG). Part of the elongasome machinery that synthesizes peripheral PG.</text>
</comment>
<comment type="subunit">
    <text evidence="6">Interacts with MreC in the elongasome.</text>
</comment>
<comment type="subcellular location">
    <subcellularLocation>
        <location evidence="10">Cell membrane</location>
        <topology evidence="3">Single-pass membrane protein</topology>
    </subcellularLocation>
    <text evidence="1">Localizes to the midcell division sites, colocalizes with StkP.</text>
</comment>
<comment type="domain">
    <text evidence="4">Comparison of drug-sensitive and drug-resistant protein structures shows the active site is highly flexible.</text>
</comment>
<comment type="disruption phenotype">
    <text evidence="5 7">Essential, it cannot be deleted (PubMed:8454182). Cells depleted of PBP2b continue to grow more slowly than wild-type until at least 12 hours after expression stops. Cells form very long chains and have an altered shape, becoming lentil-like rather than ellipsoid. Cells are more sensitive to amidase and have an altered stem peptide composition (PubMed:23873916).</text>
</comment>
<comment type="miscellaneous">
    <text evidence="4">Structures 2WAD and 2WAE are from strain 5204, a clinical, drug-resistant strain with 58 mutations in compared to strain R6.</text>
</comment>
<comment type="similarity">
    <text evidence="10">Belongs to the transpeptidase family.</text>
</comment>
<comment type="sequence caution" evidence="10">
    <conflict type="erroneous initiation">
        <sequence resource="EMBL-CDS" id="AAL00321"/>
    </conflict>
    <text>Extended N-terminus.</text>
</comment>
<organism>
    <name type="scientific">Streptococcus pneumoniae (strain ATCC BAA-255 / R6)</name>
    <dbReference type="NCBI Taxonomy" id="171101"/>
    <lineage>
        <taxon>Bacteria</taxon>
        <taxon>Bacillati</taxon>
        <taxon>Bacillota</taxon>
        <taxon>Bacilli</taxon>
        <taxon>Lactobacillales</taxon>
        <taxon>Streptococcaceae</taxon>
        <taxon>Streptococcus</taxon>
    </lineage>
</organism>
<dbReference type="EMBL" id="X16022">
    <property type="protein sequence ID" value="CAA34154.1"/>
    <property type="molecule type" value="Genomic_DNA"/>
</dbReference>
<dbReference type="EMBL" id="AE007317">
    <property type="protein sequence ID" value="AAL00321.1"/>
    <property type="status" value="ALT_INIT"/>
    <property type="molecule type" value="Genomic_DNA"/>
</dbReference>
<dbReference type="EMBL" id="X13137">
    <property type="protein sequence ID" value="CAA31527.1"/>
    <property type="molecule type" value="Genomic_DNA"/>
</dbReference>
<dbReference type="PIR" id="D98061">
    <property type="entry name" value="D98061"/>
</dbReference>
<dbReference type="PIR" id="S06000">
    <property type="entry name" value="S06000"/>
</dbReference>
<dbReference type="RefSeq" id="NP_359110.1">
    <property type="nucleotide sequence ID" value="NC_003098.1"/>
</dbReference>
<dbReference type="RefSeq" id="WP_001829432.1">
    <property type="nucleotide sequence ID" value="NC_003098.1"/>
</dbReference>
<dbReference type="PDB" id="2WAD">
    <property type="method" value="X-ray"/>
    <property type="resolution" value="2.18 A"/>
    <property type="chains" value="A/B/C=36-680"/>
</dbReference>
<dbReference type="PDB" id="2WAE">
    <property type="method" value="X-ray"/>
    <property type="resolution" value="2.26 A"/>
    <property type="chains" value="A=36-680"/>
</dbReference>
<dbReference type="PDB" id="2WAF">
    <property type="method" value="X-ray"/>
    <property type="resolution" value="3.29 A"/>
    <property type="chains" value="A=36-680"/>
</dbReference>
<dbReference type="PDBsum" id="2WAD"/>
<dbReference type="PDBsum" id="2WAE"/>
<dbReference type="PDBsum" id="2WAF"/>
<dbReference type="SMR" id="P0A3M6"/>
<dbReference type="STRING" id="171101.spr1517"/>
<dbReference type="ChEMBL" id="CHEMBL4296322"/>
<dbReference type="DrugBank" id="DB01163">
    <property type="generic name" value="Amdinocillin"/>
</dbReference>
<dbReference type="DrugBank" id="DB00415">
    <property type="generic name" value="Ampicillin"/>
</dbReference>
<dbReference type="DrugBank" id="DB08795">
    <property type="generic name" value="Azidocillin"/>
</dbReference>
<dbReference type="DrugBank" id="DB01140">
    <property type="generic name" value="Cefadroxil"/>
</dbReference>
<dbReference type="DrugBank" id="DB00456">
    <property type="generic name" value="Cefalotin"/>
</dbReference>
<dbReference type="DrugBank" id="DB01066">
    <property type="generic name" value="Cefditoren"/>
</dbReference>
<dbReference type="DrugBank" id="DB00493">
    <property type="generic name" value="Cefotaxime"/>
</dbReference>
<dbReference type="DrugBank" id="DB01331">
    <property type="generic name" value="Cefoxitin"/>
</dbReference>
<dbReference type="DrugBank" id="DB04918">
    <property type="generic name" value="Ceftobiprole"/>
</dbReference>
<dbReference type="DrugBank" id="DB14733">
    <property type="generic name" value="Ceftobiprole medocaril"/>
</dbReference>
<dbReference type="DrugBank" id="DB01212">
    <property type="generic name" value="Ceftriaxone"/>
</dbReference>
<dbReference type="DrugBank" id="DB00567">
    <property type="generic name" value="Cephalexin"/>
</dbReference>
<dbReference type="DrugBank" id="DB03313">
    <property type="generic name" value="Cephalosporin C"/>
</dbReference>
<dbReference type="DrugBank" id="DB00485">
    <property type="generic name" value="Dicloxacillin"/>
</dbReference>
<dbReference type="DrugBank" id="DB00739">
    <property type="generic name" value="Hetacillin"/>
</dbReference>
<dbReference type="DrugBank" id="DB01603">
    <property type="generic name" value="Meticillin"/>
</dbReference>
<dbReference type="DrugBank" id="DB00607">
    <property type="generic name" value="Nafcillin"/>
</dbReference>
<dbReference type="DrugBank" id="DB00713">
    <property type="generic name" value="Oxacillin"/>
</dbReference>
<dbReference type="DrugBank" id="DB00319">
    <property type="generic name" value="Piperacillin"/>
</dbReference>
<dbReference type="MEROPS" id="X52.001"/>
<dbReference type="KEGG" id="spr:spr1517"/>
<dbReference type="PATRIC" id="fig|171101.6.peg.1637"/>
<dbReference type="eggNOG" id="COG0768">
    <property type="taxonomic scope" value="Bacteria"/>
</dbReference>
<dbReference type="HOGENOM" id="CLU_009289_7_0_9"/>
<dbReference type="EvolutionaryTrace" id="P0A3M6"/>
<dbReference type="Proteomes" id="UP000000586">
    <property type="component" value="Chromosome"/>
</dbReference>
<dbReference type="GO" id="GO:0005886">
    <property type="term" value="C:plasma membrane"/>
    <property type="evidence" value="ECO:0000318"/>
    <property type="project" value="GO_Central"/>
</dbReference>
<dbReference type="GO" id="GO:0008658">
    <property type="term" value="F:penicillin binding"/>
    <property type="evidence" value="ECO:0000318"/>
    <property type="project" value="GO_Central"/>
</dbReference>
<dbReference type="GO" id="GO:0071972">
    <property type="term" value="F:peptidoglycan L,D-transpeptidase activity"/>
    <property type="evidence" value="ECO:0000318"/>
    <property type="project" value="GO_Central"/>
</dbReference>
<dbReference type="GO" id="GO:0071555">
    <property type="term" value="P:cell wall organization"/>
    <property type="evidence" value="ECO:0000318"/>
    <property type="project" value="GO_Central"/>
</dbReference>
<dbReference type="GO" id="GO:0009252">
    <property type="term" value="P:peptidoglycan biosynthetic process"/>
    <property type="evidence" value="ECO:0007669"/>
    <property type="project" value="UniProtKB-KW"/>
</dbReference>
<dbReference type="GO" id="GO:0008360">
    <property type="term" value="P:regulation of cell shape"/>
    <property type="evidence" value="ECO:0007669"/>
    <property type="project" value="UniProtKB-KW"/>
</dbReference>
<dbReference type="GO" id="GO:0046677">
    <property type="term" value="P:response to antibiotic"/>
    <property type="evidence" value="ECO:0007669"/>
    <property type="project" value="UniProtKB-KW"/>
</dbReference>
<dbReference type="FunFam" id="3.40.710.10:FF:000115">
    <property type="entry name" value="Penicillin-binding protein 2B"/>
    <property type="match status" value="1"/>
</dbReference>
<dbReference type="Gene3D" id="3.40.710.10">
    <property type="entry name" value="DD-peptidase/beta-lactamase superfamily"/>
    <property type="match status" value="1"/>
</dbReference>
<dbReference type="Gene3D" id="3.90.1310.10">
    <property type="entry name" value="Penicillin-binding protein 2a (Domain 2)"/>
    <property type="match status" value="1"/>
</dbReference>
<dbReference type="Gene3D" id="1.10.10.1230">
    <property type="entry name" value="Penicillin-binding protein, N-terminal non-catalytic domain, head sub-domain"/>
    <property type="match status" value="1"/>
</dbReference>
<dbReference type="InterPro" id="IPR050515">
    <property type="entry name" value="Bact_Transpept/Beta-Lactamase"/>
</dbReference>
<dbReference type="InterPro" id="IPR012338">
    <property type="entry name" value="Beta-lactam/transpept-like"/>
</dbReference>
<dbReference type="InterPro" id="IPR047982">
    <property type="entry name" value="PBP2B"/>
</dbReference>
<dbReference type="InterPro" id="IPR005311">
    <property type="entry name" value="PBP_dimer"/>
</dbReference>
<dbReference type="InterPro" id="IPR036138">
    <property type="entry name" value="PBP_dimer_sf"/>
</dbReference>
<dbReference type="InterPro" id="IPR001460">
    <property type="entry name" value="PCN-bd_Tpept"/>
</dbReference>
<dbReference type="NCBIfam" id="NF038278">
    <property type="entry name" value="strep_PBP2B"/>
    <property type="match status" value="1"/>
</dbReference>
<dbReference type="PANTHER" id="PTHR30627">
    <property type="entry name" value="PEPTIDOGLYCAN D,D-TRANSPEPTIDASE"/>
    <property type="match status" value="1"/>
</dbReference>
<dbReference type="PANTHER" id="PTHR30627:SF2">
    <property type="entry name" value="PEPTIDOGLYCAN D,D-TRANSPEPTIDASE MRDA"/>
    <property type="match status" value="1"/>
</dbReference>
<dbReference type="Pfam" id="PF03717">
    <property type="entry name" value="PBP_dimer"/>
    <property type="match status" value="1"/>
</dbReference>
<dbReference type="Pfam" id="PF00905">
    <property type="entry name" value="Transpeptidase"/>
    <property type="match status" value="1"/>
</dbReference>
<dbReference type="SUPFAM" id="SSF56601">
    <property type="entry name" value="beta-lactamase/transpeptidase-like"/>
    <property type="match status" value="1"/>
</dbReference>
<dbReference type="SUPFAM" id="SSF56519">
    <property type="entry name" value="Penicillin binding protein dimerisation domain"/>
    <property type="match status" value="1"/>
</dbReference>
<sequence>MRKFNSHSIPIRLNLLFSIVILLFMTIIGRLLYMQVLNKDFYEKKLASASQTKITSSSARGEIYDASGKPLVENTLKQVVSFTRSNKMTATDLKETAKKLLTYVSISSPNLTERQLADYYLADPEIYKKIVEALPSEKRLDSDGNRLSESELYNNAVDSVQTSQLNYTEDEKKEIYLFSQLNAVGNFATGTIATDPLNDSQVAVIASISKEMPGISISTSWDRKVLETSLSSIVGSVSSEKAGLPAEEAEAYLKKGYSLNDRVGTSYLEKQYEETLQGKRSVKEIHLDKYGNMESVDTIEEGSKGNNIKLTIDLAFQDSVDALLKSYFNSELENGGAKYSEGVYAVALNPKTGAVLSMSGIKHDLKTGELTPDSLGTVTNVFVPGSVVKAATISSGWENGVLSGNQTLTDQSIVFQGSAPINSWYTQAYGSFPITAVQALEYSSNTYMVQTALGLMGQTYQPNMFVGTSNLESAMEKLRSTFGEYGLGTATGIDLPDESTGFVPKEYSFANYITNAFGQFDNYTPMQLAQYVATIANNGVRVAPRIVEGIYGNNDKGGLGDLIQQLQPTEMNKVNISDSDMSILHQGFYQVAHGTSGLTTGRAFSNGALVSISGKTGTAESYVADGQQATNTNAVAYAPSDNPQIAVAVVFPHNTNLTNGVGPSIARDIINLYQKYHPMN</sequence>
<accession>P0A3M6</accession>
<accession>P10524</accession>
<gene>
    <name evidence="9" type="primary">penA</name>
    <name type="synonym">pbp2b</name>
    <name type="ordered locus">spr1517</name>
</gene>
<protein>
    <recommendedName>
        <fullName>Penicillin-binding protein 2B</fullName>
        <shortName>PBP2b</shortName>
    </recommendedName>
    <alternativeName>
        <fullName evidence="8">Peptidoglycan transpeptidase</fullName>
    </alternativeName>
</protein>
<feature type="chain" id="PRO_0000195456" description="Penicillin-binding protein 2B">
    <location>
        <begin position="1"/>
        <end position="680"/>
    </location>
</feature>
<feature type="topological domain" description="Cytoplasmic" evidence="10">
    <location>
        <begin position="1"/>
        <end position="8"/>
    </location>
</feature>
<feature type="transmembrane region" description="Helical" evidence="3">
    <location>
        <begin position="9"/>
        <end position="29"/>
    </location>
</feature>
<feature type="topological domain" description="Extracellular" evidence="10">
    <location>
        <begin position="30"/>
        <end position="680"/>
    </location>
</feature>
<feature type="region of interest" description="Transpeptidase domain" evidence="11">
    <location>
        <begin position="314"/>
        <end position="680"/>
    </location>
</feature>
<feature type="active site" description="Acyl-ester intermediate" evidence="2 11">
    <location>
        <position position="386"/>
    </location>
</feature>
<feature type="sequence conflict" description="In Ref. 1; CAA34154." evidence="10" ref="1">
    <original>L</original>
    <variation>F</variation>
    <location>
        <position position="37"/>
    </location>
</feature>
<feature type="sequence conflict" description="In Ref. 1; CAA34154." evidence="10" ref="1">
    <original>QLA</original>
    <variation>AG</variation>
    <location>
        <begin position="115"/>
        <end position="117"/>
    </location>
</feature>
<feature type="strand" evidence="16">
    <location>
        <begin position="51"/>
        <end position="55"/>
    </location>
</feature>
<feature type="strand" evidence="16">
    <location>
        <begin position="70"/>
        <end position="83"/>
    </location>
</feature>
<feature type="helix" evidence="16">
    <location>
        <begin position="90"/>
        <end position="100"/>
    </location>
</feature>
<feature type="turn" evidence="16">
    <location>
        <begin position="101"/>
        <end position="103"/>
    </location>
</feature>
<feature type="helix" evidence="16">
    <location>
        <begin position="113"/>
        <end position="121"/>
    </location>
</feature>
<feature type="helix" evidence="16">
    <location>
        <begin position="124"/>
        <end position="131"/>
    </location>
</feature>
<feature type="helix" evidence="16">
    <location>
        <begin position="150"/>
        <end position="159"/>
    </location>
</feature>
<feature type="helix" evidence="16">
    <location>
        <begin position="169"/>
        <end position="182"/>
    </location>
</feature>
<feature type="strand" evidence="16">
    <location>
        <begin position="189"/>
        <end position="191"/>
    </location>
</feature>
<feature type="helix" evidence="16">
    <location>
        <begin position="199"/>
        <end position="208"/>
    </location>
</feature>
<feature type="helix" evidence="16">
    <location>
        <begin position="209"/>
        <end position="211"/>
    </location>
</feature>
<feature type="strand" evidence="16">
    <location>
        <begin position="215"/>
        <end position="225"/>
    </location>
</feature>
<feature type="helix" evidence="16">
    <location>
        <begin position="231"/>
        <end position="234"/>
    </location>
</feature>
<feature type="turn" evidence="17">
    <location>
        <begin position="240"/>
        <end position="242"/>
    </location>
</feature>
<feature type="helix" evidence="16">
    <location>
        <begin position="246"/>
        <end position="248"/>
    </location>
</feature>
<feature type="helix" evidence="16">
    <location>
        <begin position="249"/>
        <end position="255"/>
    </location>
</feature>
<feature type="strand" evidence="18">
    <location>
        <begin position="264"/>
        <end position="266"/>
    </location>
</feature>
<feature type="helix" evidence="16">
    <location>
        <begin position="267"/>
        <end position="271"/>
    </location>
</feature>
<feature type="helix" evidence="16">
    <location>
        <begin position="273"/>
        <end position="276"/>
    </location>
</feature>
<feature type="strand" evidence="16">
    <location>
        <begin position="282"/>
        <end position="287"/>
    </location>
</feature>
<feature type="strand" evidence="17">
    <location>
        <begin position="289"/>
        <end position="291"/>
    </location>
</feature>
<feature type="strand" evidence="16">
    <location>
        <begin position="293"/>
        <end position="300"/>
    </location>
</feature>
<feature type="strand" evidence="16">
    <location>
        <begin position="307"/>
        <end position="311"/>
    </location>
</feature>
<feature type="helix" evidence="16">
    <location>
        <begin position="314"/>
        <end position="334"/>
    </location>
</feature>
<feature type="turn" evidence="16">
    <location>
        <begin position="336"/>
        <end position="339"/>
    </location>
</feature>
<feature type="strand" evidence="16">
    <location>
        <begin position="342"/>
        <end position="348"/>
    </location>
</feature>
<feature type="turn" evidence="16">
    <location>
        <begin position="350"/>
        <end position="352"/>
    </location>
</feature>
<feature type="strand" evidence="16">
    <location>
        <begin position="354"/>
        <end position="363"/>
    </location>
</feature>
<feature type="turn" evidence="16">
    <location>
        <begin position="365"/>
        <end position="367"/>
    </location>
</feature>
<feature type="strand" evidence="16">
    <location>
        <begin position="370"/>
        <end position="372"/>
    </location>
</feature>
<feature type="helix" evidence="16">
    <location>
        <begin position="376"/>
        <end position="379"/>
    </location>
</feature>
<feature type="helix" evidence="16">
    <location>
        <begin position="385"/>
        <end position="388"/>
    </location>
</feature>
<feature type="helix" evidence="16">
    <location>
        <begin position="389"/>
        <end position="398"/>
    </location>
</feature>
<feature type="strand" evidence="16">
    <location>
        <begin position="408"/>
        <end position="410"/>
    </location>
</feature>
<feature type="turn" evidence="16">
    <location>
        <begin position="424"/>
        <end position="429"/>
    </location>
</feature>
<feature type="strand" evidence="16">
    <location>
        <begin position="431"/>
        <end position="434"/>
    </location>
</feature>
<feature type="helix" evidence="16">
    <location>
        <begin position="436"/>
        <end position="442"/>
    </location>
</feature>
<feature type="helix" evidence="16">
    <location>
        <begin position="445"/>
        <end position="455"/>
    </location>
</feature>
<feature type="helix" evidence="18">
    <location>
        <begin position="468"/>
        <end position="470"/>
    </location>
</feature>
<feature type="helix" evidence="16">
    <location>
        <begin position="471"/>
        <end position="484"/>
    </location>
</feature>
<feature type="strand" evidence="16">
    <location>
        <begin position="487"/>
        <end position="489"/>
    </location>
</feature>
<feature type="strand" evidence="16">
    <location>
        <begin position="494"/>
        <end position="496"/>
    </location>
</feature>
<feature type="helix" evidence="16">
    <location>
        <begin position="509"/>
        <end position="515"/>
    </location>
</feature>
<feature type="turn" evidence="16">
    <location>
        <begin position="516"/>
        <end position="518"/>
    </location>
</feature>
<feature type="strand" evidence="16">
    <location>
        <begin position="519"/>
        <end position="523"/>
    </location>
</feature>
<feature type="helix" evidence="16">
    <location>
        <begin position="525"/>
        <end position="536"/>
    </location>
</feature>
<feature type="turn" evidence="16">
    <location>
        <begin position="537"/>
        <end position="539"/>
    </location>
</feature>
<feature type="strand" evidence="16">
    <location>
        <begin position="540"/>
        <end position="542"/>
    </location>
</feature>
<feature type="strand" evidence="16">
    <location>
        <begin position="545"/>
        <end position="553"/>
    </location>
</feature>
<feature type="strand" evidence="16">
    <location>
        <begin position="557"/>
        <end position="565"/>
    </location>
</feature>
<feature type="strand" evidence="16">
    <location>
        <begin position="570"/>
        <end position="573"/>
    </location>
</feature>
<feature type="helix" evidence="16">
    <location>
        <begin position="578"/>
        <end position="593"/>
    </location>
</feature>
<feature type="helix" evidence="16">
    <location>
        <begin position="602"/>
        <end position="604"/>
    </location>
</feature>
<feature type="turn" evidence="16">
    <location>
        <begin position="605"/>
        <end position="607"/>
    </location>
</feature>
<feature type="strand" evidence="16">
    <location>
        <begin position="613"/>
        <end position="616"/>
    </location>
</feature>
<feature type="strand" evidence="18">
    <location>
        <begin position="619"/>
        <end position="621"/>
    </location>
</feature>
<feature type="strand" evidence="18">
    <location>
        <begin position="629"/>
        <end position="631"/>
    </location>
</feature>
<feature type="strand" evidence="16">
    <location>
        <begin position="634"/>
        <end position="639"/>
    </location>
</feature>
<feature type="strand" evidence="17">
    <location>
        <begin position="640"/>
        <end position="642"/>
    </location>
</feature>
<feature type="strand" evidence="16">
    <location>
        <begin position="645"/>
        <end position="650"/>
    </location>
</feature>
<feature type="strand" evidence="18">
    <location>
        <begin position="653"/>
        <end position="655"/>
    </location>
</feature>
<feature type="helix" evidence="16">
    <location>
        <begin position="661"/>
        <end position="676"/>
    </location>
</feature>
<keyword id="KW-0002">3D-structure</keyword>
<keyword id="KW-0046">Antibiotic resistance</keyword>
<keyword id="KW-1003">Cell membrane</keyword>
<keyword id="KW-0133">Cell shape</keyword>
<keyword id="KW-0961">Cell wall biogenesis/degradation</keyword>
<keyword id="KW-0472">Membrane</keyword>
<keyword id="KW-0573">Peptidoglycan synthesis</keyword>
<keyword id="KW-1185">Reference proteome</keyword>
<keyword id="KW-0812">Transmembrane</keyword>
<keyword id="KW-1133">Transmembrane helix</keyword>